<organism>
    <name type="scientific">Mus musculus</name>
    <name type="common">Mouse</name>
    <dbReference type="NCBI Taxonomy" id="10090"/>
    <lineage>
        <taxon>Eukaryota</taxon>
        <taxon>Metazoa</taxon>
        <taxon>Chordata</taxon>
        <taxon>Craniata</taxon>
        <taxon>Vertebrata</taxon>
        <taxon>Euteleostomi</taxon>
        <taxon>Mammalia</taxon>
        <taxon>Eutheria</taxon>
        <taxon>Euarchontoglires</taxon>
        <taxon>Glires</taxon>
        <taxon>Rodentia</taxon>
        <taxon>Myomorpha</taxon>
        <taxon>Muroidea</taxon>
        <taxon>Muridae</taxon>
        <taxon>Murinae</taxon>
        <taxon>Mus</taxon>
        <taxon>Mus</taxon>
    </lineage>
</organism>
<protein>
    <recommendedName>
        <fullName>DNA damage-binding protein 2</fullName>
    </recommendedName>
    <alternativeName>
        <fullName>Damage-specific DNA-binding protein 2</fullName>
    </alternativeName>
</protein>
<proteinExistence type="evidence at protein level"/>
<keyword id="KW-0007">Acetylation</keyword>
<keyword id="KW-0158">Chromosome</keyword>
<keyword id="KW-0227">DNA damage</keyword>
<keyword id="KW-0234">DNA repair</keyword>
<keyword id="KW-0238">DNA-binding</keyword>
<keyword id="KW-0539">Nucleus</keyword>
<keyword id="KW-1185">Reference proteome</keyword>
<keyword id="KW-0677">Repeat</keyword>
<keyword id="KW-0832">Ubl conjugation</keyword>
<keyword id="KW-0833">Ubl conjugation pathway</keyword>
<keyword id="KW-0853">WD repeat</keyword>
<name>DDB2_MOUSE</name>
<feature type="chain" id="PRO_0000050954" description="DNA damage-binding protein 2">
    <location>
        <begin position="1"/>
        <end position="432"/>
    </location>
</feature>
<feature type="repeat" description="WD 1">
    <location>
        <begin position="116"/>
        <end position="151"/>
    </location>
</feature>
<feature type="repeat" description="WD 2">
    <location>
        <begin position="159"/>
        <end position="194"/>
    </location>
</feature>
<feature type="repeat" description="WD 3">
    <location>
        <begin position="203"/>
        <end position="238"/>
    </location>
</feature>
<feature type="repeat" description="WD 4">
    <location>
        <begin position="244"/>
        <end position="287"/>
    </location>
</feature>
<feature type="repeat" description="WD 5">
    <location>
        <begin position="290"/>
        <end position="329"/>
    </location>
</feature>
<feature type="repeat" description="WD 6">
    <location>
        <begin position="343"/>
        <end position="386"/>
    </location>
</feature>
<feature type="repeat" description="WD 7">
    <location>
        <begin position="396"/>
        <end position="420"/>
    </location>
</feature>
<feature type="region of interest" description="Disordered" evidence="3">
    <location>
        <begin position="1"/>
        <end position="31"/>
    </location>
</feature>
<feature type="region of interest" description="Required for interaction with DDB1" evidence="2">
    <location>
        <begin position="68"/>
        <end position="79"/>
    </location>
</feature>
<feature type="region of interest" description="Required for interaction with DDB1" evidence="2">
    <location>
        <begin position="87"/>
        <end position="98"/>
    </location>
</feature>
<feature type="region of interest" description="Photolesion recognition" evidence="1">
    <location>
        <begin position="334"/>
        <end position="336"/>
    </location>
</feature>
<feature type="short sequence motif" description="DWD box" evidence="2">
    <location>
        <begin position="256"/>
        <end position="274"/>
    </location>
</feature>
<feature type="modified residue" description="N6-acetyllysine" evidence="2">
    <location>
        <position position="35"/>
    </location>
</feature>
<feature type="modified residue" description="N6-acetyllysine" evidence="2">
    <location>
        <position position="77"/>
    </location>
</feature>
<gene>
    <name type="primary">Ddb2</name>
</gene>
<sequence length="432" mass="48375">MAPKKCPETQKSPDVAVLLRSKSRRGPQELEPEAKKLRVQGPVSSRTCESCCLLAELSSLQIPSRSSSIVRDLYQHKLGKATWSSLQQGLQKSFLHSLASYQVFRKAAPFDRRTTSLAWHPTHPSTLAVGSKGGDIMIWNFGIKDKPIFLKGIGAGGSITGLKFNHLNTNQFFASSMEGTTRLQDFKGNILRVYTSSNSCKVWFCSLDVSAKSRVVVTGDNMGHVILLSTDGKELWNLRMHKKKVAHVALNPCCDWLLATASIDQTVKIWDLRQIKGKDSFLYSLPHRHPVNAACFSPDGARLLTTDQNNEIRVYSASQWDSPLNLISHPHRHFQHLTPIKATWHSRHNLIVVGRYPDPNLKSCVPYELRTIDVFDGSSGKMMCQLYDPGYSGITSLNEFNPMGDTLASTMGYHILIWSQEEDGSQKDHERL</sequence>
<accession>Q99J79</accession>
<dbReference type="EMBL" id="AY027937">
    <property type="protein sequence ID" value="AAK16810.1"/>
    <property type="molecule type" value="mRNA"/>
</dbReference>
<dbReference type="CCDS" id="CCDS16428.1"/>
<dbReference type="RefSeq" id="NP_082395.2">
    <property type="nucleotide sequence ID" value="NM_028119.5"/>
</dbReference>
<dbReference type="SMR" id="Q99J79"/>
<dbReference type="BioGRID" id="223741">
    <property type="interactions" value="1"/>
</dbReference>
<dbReference type="ComplexPortal" id="CPX-1122">
    <property type="entry name" value="UV DNA damage recognition complex DBB1-DBB2"/>
</dbReference>
<dbReference type="ComplexPortal" id="CPX-650">
    <property type="entry name" value="CRL4-DDB2 E3 ubiquitin ligase complex, CUL4A variant"/>
</dbReference>
<dbReference type="ComplexPortal" id="CPX-651">
    <property type="entry name" value="CRL4-DDB2 E3 ubiquitin ligase complex, CUL4B variant"/>
</dbReference>
<dbReference type="FunCoup" id="Q99J79">
    <property type="interactions" value="809"/>
</dbReference>
<dbReference type="STRING" id="10090.ENSMUSP00000028696"/>
<dbReference type="iPTMnet" id="Q99J79"/>
<dbReference type="PhosphoSitePlus" id="Q99J79"/>
<dbReference type="jPOST" id="Q99J79"/>
<dbReference type="PaxDb" id="10090-ENSMUSP00000028696"/>
<dbReference type="PeptideAtlas" id="Q99J79"/>
<dbReference type="ProteomicsDB" id="279843"/>
<dbReference type="Pumba" id="Q99J79"/>
<dbReference type="Antibodypedia" id="13582">
    <property type="antibodies" value="284 antibodies from 35 providers"/>
</dbReference>
<dbReference type="DNASU" id="107986"/>
<dbReference type="Ensembl" id="ENSMUST00000028696.5">
    <property type="protein sequence ID" value="ENSMUSP00000028696.5"/>
    <property type="gene ID" value="ENSMUSG00000002109.15"/>
</dbReference>
<dbReference type="GeneID" id="107986"/>
<dbReference type="KEGG" id="mmu:107986"/>
<dbReference type="UCSC" id="uc008kvh.2">
    <property type="organism name" value="mouse"/>
</dbReference>
<dbReference type="AGR" id="MGI:1355314"/>
<dbReference type="CTD" id="1643"/>
<dbReference type="MGI" id="MGI:1355314">
    <property type="gene designation" value="Ddb2"/>
</dbReference>
<dbReference type="VEuPathDB" id="HostDB:ENSMUSG00000002109"/>
<dbReference type="eggNOG" id="KOG4328">
    <property type="taxonomic scope" value="Eukaryota"/>
</dbReference>
<dbReference type="GeneTree" id="ENSGT00510000047881"/>
<dbReference type="InParanoid" id="Q99J79"/>
<dbReference type="OMA" id="CGHEHHN"/>
<dbReference type="OrthoDB" id="9890280at2759"/>
<dbReference type="PhylomeDB" id="Q99J79"/>
<dbReference type="TreeFam" id="TF331587"/>
<dbReference type="Reactome" id="R-MMU-5689880">
    <property type="pathway name" value="Ub-specific processing proteases"/>
</dbReference>
<dbReference type="Reactome" id="R-MMU-5696394">
    <property type="pathway name" value="DNA Damage Recognition in GG-NER"/>
</dbReference>
<dbReference type="Reactome" id="R-MMU-5696395">
    <property type="pathway name" value="Formation of Incision Complex in GG-NER"/>
</dbReference>
<dbReference type="Reactome" id="R-MMU-5696400">
    <property type="pathway name" value="Dual Incision in GG-NER"/>
</dbReference>
<dbReference type="Reactome" id="R-MMU-8951664">
    <property type="pathway name" value="Neddylation"/>
</dbReference>
<dbReference type="UniPathway" id="UPA00143"/>
<dbReference type="BioGRID-ORCS" id="107986">
    <property type="hits" value="4 hits in 115 CRISPR screens"/>
</dbReference>
<dbReference type="ChiTaRS" id="Ddb2">
    <property type="organism name" value="mouse"/>
</dbReference>
<dbReference type="PRO" id="PR:Q99J79"/>
<dbReference type="Proteomes" id="UP000000589">
    <property type="component" value="Chromosome 2"/>
</dbReference>
<dbReference type="RNAct" id="Q99J79">
    <property type="molecule type" value="protein"/>
</dbReference>
<dbReference type="Bgee" id="ENSMUSG00000002109">
    <property type="expression patterns" value="Expressed in paneth cell and 248 other cell types or tissues"/>
</dbReference>
<dbReference type="ExpressionAtlas" id="Q99J79">
    <property type="expression patterns" value="baseline and differential"/>
</dbReference>
<dbReference type="GO" id="GO:0030054">
    <property type="term" value="C:cell junction"/>
    <property type="evidence" value="ECO:0007669"/>
    <property type="project" value="Ensembl"/>
</dbReference>
<dbReference type="GO" id="GO:0031464">
    <property type="term" value="C:Cul4A-RING E3 ubiquitin ligase complex"/>
    <property type="evidence" value="ECO:0000269"/>
    <property type="project" value="ComplexPortal"/>
</dbReference>
<dbReference type="GO" id="GO:0031465">
    <property type="term" value="C:Cul4B-RING E3 ubiquitin ligase complex"/>
    <property type="evidence" value="ECO:0007669"/>
    <property type="project" value="Ensembl"/>
</dbReference>
<dbReference type="GO" id="GO:0005654">
    <property type="term" value="C:nucleoplasm"/>
    <property type="evidence" value="ECO:0007669"/>
    <property type="project" value="Ensembl"/>
</dbReference>
<dbReference type="GO" id="GO:0005634">
    <property type="term" value="C:nucleus"/>
    <property type="evidence" value="ECO:0000266"/>
    <property type="project" value="ComplexPortal"/>
</dbReference>
<dbReference type="GO" id="GO:0090734">
    <property type="term" value="C:site of DNA damage"/>
    <property type="evidence" value="ECO:0000250"/>
    <property type="project" value="UniProtKB"/>
</dbReference>
<dbReference type="GO" id="GO:0003684">
    <property type="term" value="F:damaged DNA binding"/>
    <property type="evidence" value="ECO:0007669"/>
    <property type="project" value="Ensembl"/>
</dbReference>
<dbReference type="GO" id="GO:0044877">
    <property type="term" value="F:protein-containing complex binding"/>
    <property type="evidence" value="ECO:0007669"/>
    <property type="project" value="Ensembl"/>
</dbReference>
<dbReference type="GO" id="GO:0004842">
    <property type="term" value="F:ubiquitin-protein transferase activity"/>
    <property type="evidence" value="ECO:0007669"/>
    <property type="project" value="Ensembl"/>
</dbReference>
<dbReference type="GO" id="GO:0034644">
    <property type="term" value="P:cellular response to UV"/>
    <property type="evidence" value="ECO:0000269"/>
    <property type="project" value="ComplexPortal"/>
</dbReference>
<dbReference type="GO" id="GO:0006974">
    <property type="term" value="P:DNA damage response"/>
    <property type="evidence" value="ECO:0000269"/>
    <property type="project" value="ComplexPortal"/>
</dbReference>
<dbReference type="GO" id="GO:0006289">
    <property type="term" value="P:nucleotide-excision repair"/>
    <property type="evidence" value="ECO:0000250"/>
    <property type="project" value="UniProtKB"/>
</dbReference>
<dbReference type="GO" id="GO:0051865">
    <property type="term" value="P:protein autoubiquitination"/>
    <property type="evidence" value="ECO:0007669"/>
    <property type="project" value="Ensembl"/>
</dbReference>
<dbReference type="GO" id="GO:0000209">
    <property type="term" value="P:protein polyubiquitination"/>
    <property type="evidence" value="ECO:0007669"/>
    <property type="project" value="Ensembl"/>
</dbReference>
<dbReference type="GO" id="GO:0006290">
    <property type="term" value="P:pyrimidine dimer repair"/>
    <property type="evidence" value="ECO:0000315"/>
    <property type="project" value="MGI"/>
</dbReference>
<dbReference type="GO" id="GO:0070914">
    <property type="term" value="P:UV-damage excision repair"/>
    <property type="evidence" value="ECO:0000266"/>
    <property type="project" value="ComplexPortal"/>
</dbReference>
<dbReference type="FunFam" id="2.130.10.10:FF:000161">
    <property type="entry name" value="DNA damage-binding protein 2"/>
    <property type="match status" value="1"/>
</dbReference>
<dbReference type="Gene3D" id="4.10.640.30">
    <property type="match status" value="1"/>
</dbReference>
<dbReference type="Gene3D" id="2.130.10.10">
    <property type="entry name" value="YVTN repeat-like/Quinoprotein amine dehydrogenase"/>
    <property type="match status" value="1"/>
</dbReference>
<dbReference type="InterPro" id="IPR033312">
    <property type="entry name" value="DDB2"/>
</dbReference>
<dbReference type="InterPro" id="IPR015943">
    <property type="entry name" value="WD40/YVTN_repeat-like_dom_sf"/>
</dbReference>
<dbReference type="InterPro" id="IPR019775">
    <property type="entry name" value="WD40_repeat_CS"/>
</dbReference>
<dbReference type="InterPro" id="IPR036322">
    <property type="entry name" value="WD40_repeat_dom_sf"/>
</dbReference>
<dbReference type="InterPro" id="IPR001680">
    <property type="entry name" value="WD40_rpt"/>
</dbReference>
<dbReference type="PANTHER" id="PTHR15169">
    <property type="entry name" value="DAMAGE-SPECIFIC DNA BINDING PROTEIN 2"/>
    <property type="match status" value="1"/>
</dbReference>
<dbReference type="PANTHER" id="PTHR15169:SF0">
    <property type="entry name" value="DNA DAMAGE-BINDING PROTEIN 2"/>
    <property type="match status" value="1"/>
</dbReference>
<dbReference type="Pfam" id="PF00400">
    <property type="entry name" value="WD40"/>
    <property type="match status" value="2"/>
</dbReference>
<dbReference type="SMART" id="SM00320">
    <property type="entry name" value="WD40"/>
    <property type="match status" value="5"/>
</dbReference>
<dbReference type="SUPFAM" id="SSF50978">
    <property type="entry name" value="WD40 repeat-like"/>
    <property type="match status" value="1"/>
</dbReference>
<dbReference type="PROSITE" id="PS00678">
    <property type="entry name" value="WD_REPEATS_1"/>
    <property type="match status" value="1"/>
</dbReference>
<dbReference type="PROSITE" id="PS50082">
    <property type="entry name" value="WD_REPEATS_2"/>
    <property type="match status" value="1"/>
</dbReference>
<dbReference type="PROSITE" id="PS50294">
    <property type="entry name" value="WD_REPEATS_REGION"/>
    <property type="match status" value="1"/>
</dbReference>
<evidence type="ECO:0000250" key="1"/>
<evidence type="ECO:0000250" key="2">
    <source>
        <dbReference type="UniProtKB" id="Q92466"/>
    </source>
</evidence>
<evidence type="ECO:0000256" key="3">
    <source>
        <dbReference type="SAM" id="MobiDB-lite"/>
    </source>
</evidence>
<evidence type="ECO:0000269" key="4">
    <source>
    </source>
</evidence>
<evidence type="ECO:0000269" key="5">
    <source>
    </source>
</evidence>
<evidence type="ECO:0000269" key="6">
    <source>
    </source>
</evidence>
<evidence type="ECO:0000269" key="7">
    <source>
    </source>
</evidence>
<evidence type="ECO:0000269" key="8">
    <source>
    </source>
</evidence>
<evidence type="ECO:0000269" key="9">
    <source>
    </source>
</evidence>
<evidence type="ECO:0000305" key="10"/>
<comment type="function">
    <text evidence="2 4 9">Protein, which is both involved in DNA repair and protein ubiquitination, as part of the UV-DDB complex and DCX (DDB1-CUL4-X-box) complexes, respectively (PubMed:12107171). Core component of the UV-DDB complex (UV-damaged DNA-binding protein complex), a complex that recognizes UV-induced DNA damage and recruit proteins of the nucleotide excision repair pathway (the NER pathway) to initiate DNA repair (PubMed:33937266). The UV-DDB complex preferentially binds to cyclobutane pyrimidine dimers (CPD), 6-4 photoproducts (6-4 PP), apurinic sites and short mismatches (By similarity). Also functions as the substrate recognition module for the DCX (DDB2-CUL4-X-box) E3 ubiquitin-protein ligase complex DDB2-CUL4-ROC1 (also known as CUL4-DDB-ROC1 and CUL4-DDB-RBX1) (By similarity). The DDB2-CUL4-ROC1 complex may ubiquitinate histone H2A, histone H3 and histone H4 at sites of UV-induced DNA damage (By similarity). The ubiquitination of histones may facilitate their removal from the nucleosome and promote subsequent DNA repair (By similarity). The DDB2-CUL4-ROC1 complex also ubiquitinates XPC, which may enhance DNA-binding by XPC and promote NER (By similarity). The DDB2-CUL4-ROC1 complex also ubiquitinates KAT7/HBO1 in response to DNA damage, leading to its degradation: recognizes KAT7/HBO1 following phosphorylation by ATR (By similarity).</text>
</comment>
<comment type="pathway">
    <text>Protein modification; protein ubiquitination.</text>
</comment>
<comment type="subunit">
    <text evidence="2">Component of the UV-DDB complex which includes DDB1 and DDB2. The UV-DDB complex interacts with monoubiquitinated histone H2A and binds to XPC via the DDB2 subunit. Component of the DCX (DDB1-CUL4-X-box) E3 ubiquitin-protein ligase complex DDB1-CUL4-ROC1 (also known as CUL4-DDB-ROC1 and CUL4-DDB-RBX1), which includes CUL4A or CUL4B, DDB1, DDB2 and RBX1. DDB2 may function as the substrate recognition module within this complex. The DDB1-CUL4-ROC1 complex may associate with the COP9 signalosome, and this inhibits the E3 ubiquitin-protein ligase activity of the complex. A large number of other DCX complexes may also exist in which an alternate substrate targeting subunit replaces DDB2. These targeting subunits are generally known as DCAF (DDB1- and CUL4-associated factor) or CDW (CUL4-DDB1-associated WD40-repeat) proteins (By similarity).</text>
</comment>
<comment type="subcellular location">
    <subcellularLocation>
        <location evidence="8">Nucleus</location>
    </subcellularLocation>
    <subcellularLocation>
        <location evidence="2">Chromosome</location>
    </subcellularLocation>
    <text evidence="2">Accumulates at sites of DNA damage following UV irradiation.</text>
</comment>
<comment type="tissue specificity">
    <text evidence="6">Expressed in bone marrow, liver, lung, muscle, pancreas and spleen.</text>
</comment>
<comment type="domain">
    <text evidence="2">The DWD box is required for interaction with DDB1.</text>
</comment>
<comment type="domain">
    <text evidence="2">Interblade loops of the WD repeat region mediate most of the interaction with DNA. A hairpin between blades 5 and 6 inserts into DNA minor groove and mediates recognition of lesions and separation of the damaged and undamaged strands (By similarity).</text>
</comment>
<comment type="PTM">
    <text evidence="4">Phosphorylation by ABL1 negatively regulate UV-DDB activity.</text>
</comment>
<comment type="PTM">
    <text evidence="2">Ubiquitinated by CUL4A in response to UV irradiation. Ubiquitination appears to both impair DNA-binding and promotes ubiquitin-dependent proteolysis. Degradation of DDB2 at sites of DNA damage may be a prerequisite for their recognition by XPC and subsequent repair. CUL4A-mediated degradation appears to be promoted by ABL1.</text>
</comment>
<comment type="PTM">
    <text evidence="2 9">Ubiquitinated, leading to proteasomal degradation, and deubiquitinated by USP24 (By similarity). Deubiquitinated by USP44; leading to its stabilization on DNA lesions (PubMed:33937266).</text>
</comment>
<comment type="PTM">
    <text evidence="2">Acetylated. Deacetylation by SIRT6 in response to UV stress facilitates nucleotide excision repair pathway (the NER pathway) transduction.</text>
</comment>
<comment type="disruption phenotype">
    <text evidence="5 6 7">Mice exhibit elevated susceptibility to UV-induced skin carcinogenesis and enhanced rates of spontaneous tumor formation, particularly for lung and mammary adenocarcinomas. DDB2 is haploinsufficient as a tumor suppressor. The spleens of these animals are enlarged due to enhanced lymphoid proliferation while the testes are also enlarged due to reduced rates of apoptosis of testicular germ cells. Fibroblasts from these animals are resistant to p53-dependent apoptosis induced by UV treatment.</text>
</comment>
<comment type="similarity">
    <text evidence="10">Belongs to the WD repeat DDB2/WDR76 family.</text>
</comment>
<reference key="1">
    <citation type="journal article" date="2000" name="Gene">
        <title>Studies of the murine DDB1 and DDB2 genes.</title>
        <authorList>
            <person name="Zolezzi F."/>
            <person name="Linn S."/>
        </authorList>
    </citation>
    <scope>NUCLEOTIDE SEQUENCE [MRNA]</scope>
    <source>
        <tissue>Plasmacytoma</tissue>
    </source>
</reference>
<reference key="2">
    <citation type="journal article" date="2002" name="J. Biol. Chem.">
        <title>Interaction between UV-damaged DNA binding activity proteins and the c-Abl tyrosine kinase.</title>
        <authorList>
            <person name="Cong F."/>
            <person name="Tang J."/>
            <person name="Hwang B.J."/>
            <person name="Vuong B.Q."/>
            <person name="Chu G."/>
            <person name="Goff S.P."/>
        </authorList>
    </citation>
    <scope>FUNCTION</scope>
    <scope>INTERACTION WITH DDB2</scope>
    <scope>PHOSPHORYLATION BY ABL1</scope>
</reference>
<reference key="3">
    <citation type="journal article" date="2004" name="Proc. Natl. Acad. Sci. U.S.A.">
        <title>DDB2 gene disruption leads to skin tumors and resistance to apoptosis after exposure to ultraviolet light but not a chemical carcinogen.</title>
        <authorList>
            <person name="Itoh T."/>
            <person name="Cado D."/>
            <person name="Kamide R."/>
            <person name="Linn S."/>
        </authorList>
    </citation>
    <scope>DISRUPTION PHENOTYPE</scope>
</reference>
<reference key="4">
    <citation type="journal article" date="2005" name="Oncogene">
        <title>Tumor-prone phenotype of the DDB2-deficient mice.</title>
        <authorList>
            <person name="Yoon T."/>
            <person name="Chakrabortty A."/>
            <person name="Franks R."/>
            <person name="Valli T."/>
            <person name="Kiyokawa H."/>
            <person name="Raychaudhuri P."/>
        </authorList>
    </citation>
    <scope>DISRUPTION PHENOTYPE</scope>
    <scope>TISSUE SPECIFICITY</scope>
</reference>
<reference key="5">
    <citation type="journal article" date="2007" name="J. Cell Sci.">
        <title>Dynamic in vivo interaction of DDB2 E3 ubiquitin ligase with UV-damaged DNA is independent of damage-recognition protein XPC.</title>
        <authorList>
            <person name="Luijsterburg M.S."/>
            <person name="Goedhart J."/>
            <person name="Moser J."/>
            <person name="Kool H."/>
            <person name="Geverts B."/>
            <person name="Houtsmuller A.B."/>
            <person name="Mullenders L.H.F."/>
            <person name="Vermeulen W."/>
            <person name="van Driel R."/>
        </authorList>
    </citation>
    <scope>SUBCELLULAR LOCATION</scope>
</reference>
<reference key="6">
    <citation type="journal article" date="2007" name="Hum. Mol. Genet.">
        <title>Ddb2 is a haploinsufficient tumor suppressor and controls spontaneous germ cell apoptosis.</title>
        <authorList>
            <person name="Itoh T."/>
            <person name="Iwashita S."/>
            <person name="Cohen M.B."/>
            <person name="Meyerholz D.K."/>
            <person name="Linn S."/>
        </authorList>
    </citation>
    <scope>DISRUPTION PHENOTYPE</scope>
</reference>
<reference key="7">
    <citation type="journal article" date="2010" name="Cell">
        <title>A tissue-specific atlas of mouse protein phosphorylation and expression.</title>
        <authorList>
            <person name="Huttlin E.L."/>
            <person name="Jedrychowski M.P."/>
            <person name="Elias J.E."/>
            <person name="Goswami T."/>
            <person name="Rad R."/>
            <person name="Beausoleil S.A."/>
            <person name="Villen J."/>
            <person name="Haas W."/>
            <person name="Sowa M.E."/>
            <person name="Gygi S.P."/>
        </authorList>
    </citation>
    <scope>IDENTIFICATION BY MASS SPECTROMETRY [LARGE SCALE ANALYSIS]</scope>
    <source>
        <tissue>Testis</tissue>
    </source>
</reference>
<reference key="8">
    <citation type="journal article" date="2021" name="Front. Cell Dev. Biol.">
        <title>USP44 Stabilizes DDB2 to Facilitate Nucleotide Excision Repair and Prevent Tumors.</title>
        <authorList>
            <person name="Zhang Y."/>
            <person name="Mandemaker I.K."/>
            <person name="Matsumoto S."/>
            <person name="Foreman O."/>
            <person name="Holland C.P."/>
            <person name="Lloyd W.R."/>
            <person name="Sugasawa K."/>
            <person name="Vermeulen W."/>
            <person name="Marteijn J.A."/>
            <person name="Galardy P.J."/>
        </authorList>
    </citation>
    <scope>FUNCTION</scope>
    <scope>DEUBIQUITINATION BY USP44</scope>
</reference>